<reference key="1">
    <citation type="submission" date="2006-02" db="EMBL/GenBank/DDBJ databases">
        <title>Complete sequence of chromosome of Jannaschia sp. CCS1.</title>
        <authorList>
            <consortium name="US DOE Joint Genome Institute"/>
            <person name="Copeland A."/>
            <person name="Lucas S."/>
            <person name="Lapidus A."/>
            <person name="Barry K."/>
            <person name="Detter J.C."/>
            <person name="Glavina del Rio T."/>
            <person name="Hammon N."/>
            <person name="Israni S."/>
            <person name="Pitluck S."/>
            <person name="Brettin T."/>
            <person name="Bruce D."/>
            <person name="Han C."/>
            <person name="Tapia R."/>
            <person name="Gilna P."/>
            <person name="Chertkov O."/>
            <person name="Saunders E."/>
            <person name="Schmutz J."/>
            <person name="Larimer F."/>
            <person name="Land M."/>
            <person name="Kyrpides N."/>
            <person name="Lykidis A."/>
            <person name="Moran M.A."/>
            <person name="Belas R."/>
            <person name="Ye W."/>
            <person name="Buchan A."/>
            <person name="Gonzalez J.M."/>
            <person name="Schell M.A."/>
            <person name="Richardson P."/>
        </authorList>
    </citation>
    <scope>NUCLEOTIDE SEQUENCE [LARGE SCALE GENOMIC DNA]</scope>
    <source>
        <strain>CCS1</strain>
    </source>
</reference>
<sequence length="100" mass="10842">MNLTPREKDKLLISLAAMVARGRLERGCKLNHPEAIALITDYVVEGARDGRAVADLMEAGAHVITADQCMDGIAAMIHDVQVEATFPDGTKLVTVHHPIR</sequence>
<protein>
    <recommendedName>
        <fullName evidence="1">Urease subunit gamma</fullName>
        <ecNumber evidence="1">3.5.1.5</ecNumber>
    </recommendedName>
    <alternativeName>
        <fullName evidence="1">Urea amidohydrolase subunit gamma</fullName>
    </alternativeName>
</protein>
<comment type="catalytic activity">
    <reaction evidence="1">
        <text>urea + 2 H2O + H(+) = hydrogencarbonate + 2 NH4(+)</text>
        <dbReference type="Rhea" id="RHEA:20557"/>
        <dbReference type="ChEBI" id="CHEBI:15377"/>
        <dbReference type="ChEBI" id="CHEBI:15378"/>
        <dbReference type="ChEBI" id="CHEBI:16199"/>
        <dbReference type="ChEBI" id="CHEBI:17544"/>
        <dbReference type="ChEBI" id="CHEBI:28938"/>
        <dbReference type="EC" id="3.5.1.5"/>
    </reaction>
</comment>
<comment type="pathway">
    <text evidence="1">Nitrogen metabolism; urea degradation; CO(2) and NH(3) from urea (urease route): step 1/1.</text>
</comment>
<comment type="subunit">
    <text evidence="1">Heterotrimer of UreA (gamma), UreB (beta) and UreC (alpha) subunits. Three heterotrimers associate to form the active enzyme.</text>
</comment>
<comment type="subcellular location">
    <subcellularLocation>
        <location evidence="1">Cytoplasm</location>
    </subcellularLocation>
</comment>
<comment type="similarity">
    <text evidence="1">Belongs to the urease gamma subunit family.</text>
</comment>
<organism>
    <name type="scientific">Jannaschia sp. (strain CCS1)</name>
    <dbReference type="NCBI Taxonomy" id="290400"/>
    <lineage>
        <taxon>Bacteria</taxon>
        <taxon>Pseudomonadati</taxon>
        <taxon>Pseudomonadota</taxon>
        <taxon>Alphaproteobacteria</taxon>
        <taxon>Rhodobacterales</taxon>
        <taxon>Roseobacteraceae</taxon>
        <taxon>Jannaschia</taxon>
    </lineage>
</organism>
<keyword id="KW-0963">Cytoplasm</keyword>
<keyword id="KW-0378">Hydrolase</keyword>
<keyword id="KW-1185">Reference proteome</keyword>
<evidence type="ECO:0000255" key="1">
    <source>
        <dbReference type="HAMAP-Rule" id="MF_00739"/>
    </source>
</evidence>
<name>URE3_JANSC</name>
<gene>
    <name evidence="1" type="primary">ureA</name>
    <name type="ordered locus">Jann_1745</name>
</gene>
<feature type="chain" id="PRO_0000239906" description="Urease subunit gamma">
    <location>
        <begin position="1"/>
        <end position="100"/>
    </location>
</feature>
<dbReference type="EC" id="3.5.1.5" evidence="1"/>
<dbReference type="EMBL" id="CP000264">
    <property type="protein sequence ID" value="ABD54662.1"/>
    <property type="molecule type" value="Genomic_DNA"/>
</dbReference>
<dbReference type="RefSeq" id="WP_011454867.1">
    <property type="nucleotide sequence ID" value="NC_007802.1"/>
</dbReference>
<dbReference type="SMR" id="Q28RK0"/>
<dbReference type="STRING" id="290400.Jann_1745"/>
<dbReference type="KEGG" id="jan:Jann_1745"/>
<dbReference type="eggNOG" id="COG0831">
    <property type="taxonomic scope" value="Bacteria"/>
</dbReference>
<dbReference type="HOGENOM" id="CLU_145825_1_0_5"/>
<dbReference type="OrthoDB" id="9797217at2"/>
<dbReference type="UniPathway" id="UPA00258">
    <property type="reaction ID" value="UER00370"/>
</dbReference>
<dbReference type="Proteomes" id="UP000008326">
    <property type="component" value="Chromosome"/>
</dbReference>
<dbReference type="GO" id="GO:0005737">
    <property type="term" value="C:cytoplasm"/>
    <property type="evidence" value="ECO:0007669"/>
    <property type="project" value="UniProtKB-SubCell"/>
</dbReference>
<dbReference type="GO" id="GO:0016151">
    <property type="term" value="F:nickel cation binding"/>
    <property type="evidence" value="ECO:0007669"/>
    <property type="project" value="InterPro"/>
</dbReference>
<dbReference type="GO" id="GO:0009039">
    <property type="term" value="F:urease activity"/>
    <property type="evidence" value="ECO:0007669"/>
    <property type="project" value="UniProtKB-UniRule"/>
</dbReference>
<dbReference type="GO" id="GO:0043419">
    <property type="term" value="P:urea catabolic process"/>
    <property type="evidence" value="ECO:0007669"/>
    <property type="project" value="UniProtKB-UniRule"/>
</dbReference>
<dbReference type="CDD" id="cd00390">
    <property type="entry name" value="Urease_gamma"/>
    <property type="match status" value="1"/>
</dbReference>
<dbReference type="Gene3D" id="3.30.280.10">
    <property type="entry name" value="Urease, gamma-like subunit"/>
    <property type="match status" value="1"/>
</dbReference>
<dbReference type="HAMAP" id="MF_00739">
    <property type="entry name" value="Urease_gamma"/>
    <property type="match status" value="1"/>
</dbReference>
<dbReference type="InterPro" id="IPR012010">
    <property type="entry name" value="Urease_gamma"/>
</dbReference>
<dbReference type="InterPro" id="IPR002026">
    <property type="entry name" value="Urease_gamma/gamma-beta_su"/>
</dbReference>
<dbReference type="InterPro" id="IPR036463">
    <property type="entry name" value="Urease_gamma_sf"/>
</dbReference>
<dbReference type="InterPro" id="IPR050069">
    <property type="entry name" value="Urease_subunit"/>
</dbReference>
<dbReference type="NCBIfam" id="NF009712">
    <property type="entry name" value="PRK13241.1"/>
    <property type="match status" value="1"/>
</dbReference>
<dbReference type="NCBIfam" id="TIGR00193">
    <property type="entry name" value="urease_gam"/>
    <property type="match status" value="1"/>
</dbReference>
<dbReference type="PANTHER" id="PTHR33569">
    <property type="entry name" value="UREASE"/>
    <property type="match status" value="1"/>
</dbReference>
<dbReference type="PANTHER" id="PTHR33569:SF1">
    <property type="entry name" value="UREASE"/>
    <property type="match status" value="1"/>
</dbReference>
<dbReference type="Pfam" id="PF00547">
    <property type="entry name" value="Urease_gamma"/>
    <property type="match status" value="1"/>
</dbReference>
<dbReference type="PIRSF" id="PIRSF001223">
    <property type="entry name" value="Urease_gamma"/>
    <property type="match status" value="1"/>
</dbReference>
<dbReference type="SUPFAM" id="SSF54111">
    <property type="entry name" value="Urease, gamma-subunit"/>
    <property type="match status" value="1"/>
</dbReference>
<accession>Q28RK0</accession>
<proteinExistence type="inferred from homology"/>